<name>RSSA_PLAF7</name>
<gene>
    <name evidence="5" type="primary">RPS2</name>
    <name evidence="4" type="synonym">uS2</name>
    <name type="ORF">PF10_0264</name>
    <name type="ORF">PF3D7_1026800</name>
</gene>
<dbReference type="EMBL" id="LN999944">
    <property type="protein sequence ID" value="CZT98522.1"/>
    <property type="molecule type" value="Genomic_DNA"/>
</dbReference>
<dbReference type="RefSeq" id="XP_001347548.1">
    <property type="nucleotide sequence ID" value="XM_001347512.1"/>
</dbReference>
<dbReference type="PDB" id="3J7A">
    <property type="method" value="EM"/>
    <property type="resolution" value="3.20 A"/>
    <property type="chains" value="C=1-263"/>
</dbReference>
<dbReference type="PDB" id="3JBN">
    <property type="method" value="EM"/>
    <property type="resolution" value="4.70 A"/>
    <property type="chains" value="C=10-204"/>
</dbReference>
<dbReference type="PDB" id="3JBO">
    <property type="method" value="EM"/>
    <property type="resolution" value="5.80 A"/>
    <property type="chains" value="C=10-204"/>
</dbReference>
<dbReference type="PDB" id="3JBP">
    <property type="method" value="EM"/>
    <property type="resolution" value="6.70 A"/>
    <property type="chains" value="C=10-204"/>
</dbReference>
<dbReference type="PDB" id="6OKK">
    <property type="method" value="EM"/>
    <property type="resolution" value="3.30 A"/>
    <property type="chains" value="C=1-263"/>
</dbReference>
<dbReference type="PDB" id="8TPU">
    <property type="method" value="EM"/>
    <property type="resolution" value="4.10 A"/>
    <property type="chains" value="SC=1-263"/>
</dbReference>
<dbReference type="PDBsum" id="3J7A"/>
<dbReference type="PDBsum" id="3JBN"/>
<dbReference type="PDBsum" id="3JBO"/>
<dbReference type="PDBsum" id="3JBP"/>
<dbReference type="PDBsum" id="6OKK"/>
<dbReference type="PDBsum" id="8TPU"/>
<dbReference type="EMDB" id="EMD-41485"/>
<dbReference type="SMR" id="Q8IJD4"/>
<dbReference type="BioGRID" id="1205835">
    <property type="interactions" value="1"/>
</dbReference>
<dbReference type="FunCoup" id="Q8IJD4">
    <property type="interactions" value="92"/>
</dbReference>
<dbReference type="IntAct" id="Q8IJD4">
    <property type="interactions" value="2"/>
</dbReference>
<dbReference type="STRING" id="36329.Q8IJD4"/>
<dbReference type="PaxDb" id="5833-PF10_0264"/>
<dbReference type="EnsemblProtists" id="CZT98522">
    <property type="protein sequence ID" value="CZT98522"/>
    <property type="gene ID" value="PF3D7_1026800"/>
</dbReference>
<dbReference type="GeneID" id="810421"/>
<dbReference type="KEGG" id="pfa:PF3D7_1026800"/>
<dbReference type="VEuPathDB" id="PlasmoDB:PF3D7_1026800"/>
<dbReference type="HOGENOM" id="CLU_058171_1_0_1"/>
<dbReference type="OMA" id="VKNFFEP"/>
<dbReference type="OrthoDB" id="414863at2759"/>
<dbReference type="PhylomeDB" id="Q8IJD4"/>
<dbReference type="Reactome" id="R-PFA-156827">
    <property type="pathway name" value="L13a-mediated translational silencing of Ceruloplasmin expression"/>
</dbReference>
<dbReference type="Reactome" id="R-PFA-1799339">
    <property type="pathway name" value="SRP-dependent cotranslational protein targeting to membrane"/>
</dbReference>
<dbReference type="Reactome" id="R-PFA-72649">
    <property type="pathway name" value="Translation initiation complex formation"/>
</dbReference>
<dbReference type="Reactome" id="R-PFA-72689">
    <property type="pathway name" value="Formation of a pool of free 40S subunits"/>
</dbReference>
<dbReference type="Reactome" id="R-PFA-72695">
    <property type="pathway name" value="Formation of the ternary complex, and subsequently, the 43S complex"/>
</dbReference>
<dbReference type="Reactome" id="R-PFA-72702">
    <property type="pathway name" value="Ribosomal scanning and start codon recognition"/>
</dbReference>
<dbReference type="Reactome" id="R-PFA-72706">
    <property type="pathway name" value="GTP hydrolysis and joining of the 60S ribosomal subunit"/>
</dbReference>
<dbReference type="Reactome" id="R-PFA-975956">
    <property type="pathway name" value="Nonsense Mediated Decay (NMD) independent of the Exon Junction Complex (EJC)"/>
</dbReference>
<dbReference type="Reactome" id="R-PFA-975957">
    <property type="pathway name" value="Nonsense Mediated Decay (NMD) enhanced by the Exon Junction Complex (EJC)"/>
</dbReference>
<dbReference type="EvolutionaryTrace" id="Q8IJD4"/>
<dbReference type="Proteomes" id="UP000001450">
    <property type="component" value="Chromosome 10"/>
</dbReference>
<dbReference type="GO" id="GO:0022627">
    <property type="term" value="C:cytosolic small ribosomal subunit"/>
    <property type="evidence" value="ECO:0000314"/>
    <property type="project" value="GeneDB"/>
</dbReference>
<dbReference type="GO" id="GO:0003735">
    <property type="term" value="F:structural constituent of ribosome"/>
    <property type="evidence" value="ECO:0000314"/>
    <property type="project" value="GeneDB"/>
</dbReference>
<dbReference type="GO" id="GO:0002181">
    <property type="term" value="P:cytoplasmic translation"/>
    <property type="evidence" value="ECO:0000318"/>
    <property type="project" value="GO_Central"/>
</dbReference>
<dbReference type="GO" id="GO:0000028">
    <property type="term" value="P:ribosomal small subunit assembly"/>
    <property type="evidence" value="ECO:0000318"/>
    <property type="project" value="GO_Central"/>
</dbReference>
<dbReference type="GO" id="GO:0006412">
    <property type="term" value="P:translation"/>
    <property type="evidence" value="ECO:0000250"/>
    <property type="project" value="GeneDB"/>
</dbReference>
<dbReference type="CDD" id="cd01425">
    <property type="entry name" value="RPS2"/>
    <property type="match status" value="1"/>
</dbReference>
<dbReference type="FunFam" id="3.40.50.10490:FF:000012">
    <property type="entry name" value="40S ribosomal protein SA"/>
    <property type="match status" value="1"/>
</dbReference>
<dbReference type="Gene3D" id="3.40.50.10490">
    <property type="entry name" value="Glucose-6-phosphate isomerase like protein, domain 1"/>
    <property type="match status" value="1"/>
</dbReference>
<dbReference type="HAMAP" id="MF_03015">
    <property type="entry name" value="Ribosomal_S2_euk"/>
    <property type="match status" value="1"/>
</dbReference>
<dbReference type="InterPro" id="IPR001865">
    <property type="entry name" value="Ribosomal_uS2"/>
</dbReference>
<dbReference type="InterPro" id="IPR018130">
    <property type="entry name" value="Ribosomal_uS2_CS"/>
</dbReference>
<dbReference type="InterPro" id="IPR027498">
    <property type="entry name" value="Ribosomal_uS2_euk"/>
</dbReference>
<dbReference type="InterPro" id="IPR005707">
    <property type="entry name" value="Ribosomal_uS2_euk/arc"/>
</dbReference>
<dbReference type="InterPro" id="IPR023591">
    <property type="entry name" value="Ribosomal_uS2_flav_dom_sf"/>
</dbReference>
<dbReference type="NCBIfam" id="TIGR01012">
    <property type="entry name" value="uS2_euk_arch"/>
    <property type="match status" value="1"/>
</dbReference>
<dbReference type="PANTHER" id="PTHR11489">
    <property type="entry name" value="40S RIBOSOMAL PROTEIN SA"/>
    <property type="match status" value="1"/>
</dbReference>
<dbReference type="Pfam" id="PF00318">
    <property type="entry name" value="Ribosomal_S2"/>
    <property type="match status" value="2"/>
</dbReference>
<dbReference type="PRINTS" id="PR00395">
    <property type="entry name" value="RIBOSOMALS2"/>
</dbReference>
<dbReference type="SUPFAM" id="SSF52313">
    <property type="entry name" value="Ribosomal protein S2"/>
    <property type="match status" value="1"/>
</dbReference>
<dbReference type="PROSITE" id="PS00962">
    <property type="entry name" value="RIBOSOMAL_S2_1"/>
    <property type="match status" value="1"/>
</dbReference>
<dbReference type="PROSITE" id="PS00963">
    <property type="entry name" value="RIBOSOMAL_S2_2"/>
    <property type="match status" value="1"/>
</dbReference>
<reference key="1">
    <citation type="journal article" date="2002" name="Nature">
        <title>Genome sequence of the human malaria parasite Plasmodium falciparum.</title>
        <authorList>
            <person name="Gardner M.J."/>
            <person name="Hall N."/>
            <person name="Fung E."/>
            <person name="White O."/>
            <person name="Berriman M."/>
            <person name="Hyman R.W."/>
            <person name="Carlton J.M."/>
            <person name="Pain A."/>
            <person name="Nelson K.E."/>
            <person name="Bowman S."/>
            <person name="Paulsen I.T."/>
            <person name="James K.D."/>
            <person name="Eisen J.A."/>
            <person name="Rutherford K.M."/>
            <person name="Salzberg S.L."/>
            <person name="Craig A."/>
            <person name="Kyes S."/>
            <person name="Chan M.-S."/>
            <person name="Nene V."/>
            <person name="Shallom S.J."/>
            <person name="Suh B."/>
            <person name="Peterson J."/>
            <person name="Angiuoli S."/>
            <person name="Pertea M."/>
            <person name="Allen J."/>
            <person name="Selengut J."/>
            <person name="Haft D."/>
            <person name="Mather M.W."/>
            <person name="Vaidya A.B."/>
            <person name="Martin D.M.A."/>
            <person name="Fairlamb A.H."/>
            <person name="Fraunholz M.J."/>
            <person name="Roos D.S."/>
            <person name="Ralph S.A."/>
            <person name="McFadden G.I."/>
            <person name="Cummings L.M."/>
            <person name="Subramanian G.M."/>
            <person name="Mungall C."/>
            <person name="Venter J.C."/>
            <person name="Carucci D.J."/>
            <person name="Hoffman S.L."/>
            <person name="Newbold C."/>
            <person name="Davis R.W."/>
            <person name="Fraser C.M."/>
            <person name="Barrell B.G."/>
        </authorList>
    </citation>
    <scope>NUCLEOTIDE SEQUENCE [LARGE SCALE GENOMIC DNA]</scope>
    <source>
        <strain>3D7</strain>
    </source>
</reference>
<reference evidence="8 12" key="2">
    <citation type="journal article" date="2014" name="Elife">
        <title>Cryo-EM structure of the Plasmodium falciparum 80S ribosome bound to the anti-protozoan drug emetine.</title>
        <authorList>
            <person name="Wong W."/>
            <person name="Bai X.C."/>
            <person name="Brown A."/>
            <person name="Fernandez I.S."/>
            <person name="Hanssen E."/>
            <person name="Condron M."/>
            <person name="Tan Y.H."/>
            <person name="Baum J."/>
            <person name="Scheres S.H."/>
        </authorList>
    </citation>
    <scope>STRUCTURE BY ELECTRON MICROSCOPY (3.20 ANGSTROMS) IN COMPLEX WITH RIBOSOMAL PROTEINS; RRNA; TRNA AND EMETINE INHIBITOR</scope>
    <scope>FUNCTION</scope>
    <scope>SUBCELLULAR LOCATION</scope>
    <scope>DEVELOPMENTAL STAGE</scope>
</reference>
<reference evidence="9 10 11" key="3">
    <citation type="journal article" date="2015" name="Nucleic Acids Res.">
        <title>Dynamical features of the Plasmodium falciparum ribosome during translation.</title>
        <authorList>
            <person name="Sun M."/>
            <person name="Li W."/>
            <person name="Blomqvist K."/>
            <person name="Das S."/>
            <person name="Hashem Y."/>
            <person name="Dvorin J.D."/>
            <person name="Frank J."/>
        </authorList>
    </citation>
    <scope>STRUCTURE BY ELECTRON MICROSCOPY (4.70 ANGSTROMS) OF 10-204 IN COMPLEX WITH RIBOSOMAL PROTEINS; RRNA AND TRNA</scope>
    <scope>FUNCTION</scope>
    <scope>DEVELOPMENTAL STAGE</scope>
</reference>
<accession>Q8IJD4</accession>
<accession>A0A143ZZG2</accession>
<comment type="function">
    <text evidence="1 6 7">Component of the ribosome, a large ribonucleoprotein complex responsible for the synthesis of proteins in the cell (Probable). The small ribosomal subunit (SSU) binds messenger RNAs (mRNAs) and translates the encoded message by selecting cognate aminoacyl-transfer RNA (tRNA) molecules (Probable). The large subunit (LSU) contains the ribosomal catalytic site termed the peptidyl transferase center (PTC), which catalyzes the formation of peptide bonds, thereby polymerizing the amino acids delivered by tRNAs into a polypeptide chain (Probable). The nascent polypeptides leave the ribosome through a tunnel in the LSU and interact with protein factors that function in enzymatic processing, targeting, and the membrane insertion of nascent chains at the exit of the ribosomal tunnel (Probable). Required for the assembly and/or stability of the 40S ribosomal subunit. Required for the processing of the 20S rRNA-precursor to mature 18S rRNA in a late step of the maturation of 40S ribosomal subunits (By similarity).</text>
</comment>
<comment type="subunit">
    <text evidence="2 3">Component of the small ribosomal subunit (PubMed:24913268, PubMed:26432834). Mature ribosomes consist of a small (40S) and a large (60S) subunit (PubMed:24913268, PubMed:26432834). The 40S subunit contains about 32 different proteins and 1 molecule of RNA (18S). The 60S subunit contains about 42 different proteins and 3 molecules of RNA (28S, 5.8S and 5S) (PubMed:24913268, PubMed:26432834).</text>
</comment>
<comment type="subcellular location">
    <subcellularLocation>
        <location evidence="1 2">Cytoplasm</location>
    </subcellularLocation>
</comment>
<comment type="developmental stage">
    <text evidence="2 3">Expressed during the asexual blood stage (at protein level).</text>
</comment>
<comment type="similarity">
    <text evidence="1">Belongs to the universal ribosomal protein uS2 family.</text>
</comment>
<proteinExistence type="evidence at protein level"/>
<keyword id="KW-0002">3D-structure</keyword>
<keyword id="KW-0963">Cytoplasm</keyword>
<keyword id="KW-1185">Reference proteome</keyword>
<keyword id="KW-0687">Ribonucleoprotein</keyword>
<keyword id="KW-0689">Ribosomal protein</keyword>
<protein>
    <recommendedName>
        <fullName evidence="1">Small ribosomal subunit protein uS2</fullName>
    </recommendedName>
    <alternativeName>
        <fullName evidence="5">40S ribosomal protein S2</fullName>
    </alternativeName>
    <alternativeName>
        <fullName evidence="5">40S ribosomal protein SA</fullName>
    </alternativeName>
</protein>
<organism>
    <name type="scientific">Plasmodium falciparum (isolate 3D7)</name>
    <dbReference type="NCBI Taxonomy" id="36329"/>
    <lineage>
        <taxon>Eukaryota</taxon>
        <taxon>Sar</taxon>
        <taxon>Alveolata</taxon>
        <taxon>Apicomplexa</taxon>
        <taxon>Aconoidasida</taxon>
        <taxon>Haemosporida</taxon>
        <taxon>Plasmodiidae</taxon>
        <taxon>Plasmodium</taxon>
        <taxon>Plasmodium (Laverania)</taxon>
    </lineage>
</organism>
<feature type="chain" id="PRO_0000371607" description="Small ribosomal subunit protein uS2">
    <location>
        <begin position="1"/>
        <end position="263"/>
    </location>
</feature>
<feature type="helix" evidence="13">
    <location>
        <begin position="11"/>
        <end position="19"/>
    </location>
</feature>
<feature type="turn" evidence="13">
    <location>
        <begin position="20"/>
        <end position="23"/>
    </location>
</feature>
<feature type="helix" evidence="13">
    <location>
        <begin position="31"/>
        <end position="36"/>
    </location>
</feature>
<feature type="strand" evidence="13">
    <location>
        <begin position="37"/>
        <end position="40"/>
    </location>
</feature>
<feature type="strand" evidence="13">
    <location>
        <begin position="42"/>
        <end position="44"/>
    </location>
</feature>
<feature type="strand" evidence="13">
    <location>
        <begin position="46"/>
        <end position="48"/>
    </location>
</feature>
<feature type="helix" evidence="13">
    <location>
        <begin position="51"/>
        <end position="66"/>
    </location>
</feature>
<feature type="strand" evidence="13">
    <location>
        <begin position="67"/>
        <end position="69"/>
    </location>
</feature>
<feature type="helix" evidence="13">
    <location>
        <begin position="70"/>
        <end position="72"/>
    </location>
</feature>
<feature type="strand" evidence="13">
    <location>
        <begin position="73"/>
        <end position="76"/>
    </location>
</feature>
<feature type="turn" evidence="13">
    <location>
        <begin position="80"/>
        <end position="82"/>
    </location>
</feature>
<feature type="helix" evidence="13">
    <location>
        <begin position="83"/>
        <end position="92"/>
    </location>
</feature>
<feature type="turn" evidence="13">
    <location>
        <begin position="104"/>
        <end position="108"/>
    </location>
</feature>
<feature type="strand" evidence="13">
    <location>
        <begin position="119"/>
        <end position="124"/>
    </location>
</feature>
<feature type="turn" evidence="13">
    <location>
        <begin position="126"/>
        <end position="128"/>
    </location>
</feature>
<feature type="helix" evidence="13">
    <location>
        <begin position="130"/>
        <end position="138"/>
    </location>
</feature>
<feature type="strand" evidence="13">
    <location>
        <begin position="157"/>
        <end position="159"/>
    </location>
</feature>
<feature type="strand" evidence="13">
    <location>
        <begin position="164"/>
        <end position="166"/>
    </location>
</feature>
<feature type="helix" evidence="13">
    <location>
        <begin position="167"/>
        <end position="184"/>
    </location>
</feature>
<feature type="strand" evidence="13">
    <location>
        <begin position="190"/>
        <end position="192"/>
    </location>
</feature>
<feature type="strand" evidence="13">
    <location>
        <begin position="198"/>
        <end position="202"/>
    </location>
</feature>
<evidence type="ECO:0000255" key="1">
    <source>
        <dbReference type="HAMAP-Rule" id="MF_03015"/>
    </source>
</evidence>
<evidence type="ECO:0000269" key="2">
    <source>
    </source>
</evidence>
<evidence type="ECO:0000269" key="3">
    <source>
    </source>
</evidence>
<evidence type="ECO:0000303" key="4">
    <source>
    </source>
</evidence>
<evidence type="ECO:0000305" key="5"/>
<evidence type="ECO:0000305" key="6">
    <source>
    </source>
</evidence>
<evidence type="ECO:0000305" key="7">
    <source>
    </source>
</evidence>
<evidence type="ECO:0007744" key="8">
    <source>
        <dbReference type="PDB" id="3J7A"/>
    </source>
</evidence>
<evidence type="ECO:0007744" key="9">
    <source>
        <dbReference type="PDB" id="3JBN"/>
    </source>
</evidence>
<evidence type="ECO:0007744" key="10">
    <source>
        <dbReference type="PDB" id="3JBO"/>
    </source>
</evidence>
<evidence type="ECO:0007744" key="11">
    <source>
        <dbReference type="PDB" id="3JBP"/>
    </source>
</evidence>
<evidence type="ECO:0007744" key="12">
    <source>
        <dbReference type="PDB" id="6OKK"/>
    </source>
</evidence>
<evidence type="ECO:0007829" key="13">
    <source>
        <dbReference type="PDB" id="3J7A"/>
    </source>
</evidence>
<sequence length="263" mass="29856">MSNKKGQSPKEESIAKMLICKVHIGTKNLENKMKRYVYTRAKDGVHIINLAKTYEKLQLAARIIVAISNPADVVVVSARPFGSRAVLKFAQYTGAQAIAGRWTPGMLTNQIIQKFTEPRLLIVTDPRTDAQSVKESAYANIPVIALCDSDSPLEHVDIAIPCNNKGKESIALMYWLLAQEVLYLKGVIPRSEPWNVMVDMFLWRDPEQFELKNLANEENTPTAPHLIENQYAAEAPYDEWTKKEEWNDNTNEDWKNPIAAEEW</sequence>